<accession>Q28505</accession>
<name>FMO2_MACMU</name>
<sequence>MAKKVAVIGAGVSGLISLKCCVDEGLEPTCFERTEDIGGVWRFKEKVEDGRASIYQSVVTNTSKEMSCFSDFPMPEDFPNFLHNSKLLEYFRIFAKKFDLLKYIQFQTTVLSVRKCPDFSSSGQWKVVTQSNGKEQSAVFDAVMVCTGHHFLPHIPLKSFPGIERFKGQYFHSRQYKHPDGFEGKRILVIGMGNSGSDIAVELSKSAAQVFISTRHGTWVMSRVSEDGYPWDSVFHTRFRSMLRNVLPRTVVKWMIEQQMNQWFNHENYGLEPQNKYIMKEPVLNDDVPSRLLCGAIKVKSTVKELTETSAIFEDGTVEENIDVIIFATGYSFSFPFLEDSLVKVENNMVSLYKYIFPAHLEKSTFACIGLIQPLGSIFPTAELQARWVTRVFKGLCHLPSERTMMMDIIKRNEKRIDLFGESQSQTLQTNYVDYLDELALEIGAKPDFCSLLFKDPKLAVRLFFGPCNSYQYRLAGPGQWEGARSAIFTQKQRILKPLKTRVLKDSSNFPVSFLLKILGLVAVVVAFFCQLQWS</sequence>
<protein>
    <recommendedName>
        <fullName evidence="3">Dimethylaniline monooxygenase [N-oxide-forming] 2</fullName>
        <ecNumber evidence="6">1.14.13.-</ecNumber>
        <ecNumber evidence="6">1.14.13.8</ecNumber>
    </recommendedName>
    <alternativeName>
        <fullName>Dimethylaniline oxidase 2</fullName>
    </alternativeName>
    <alternativeName>
        <fullName>FMO 1B1</fullName>
    </alternativeName>
    <alternativeName>
        <fullName>Pulmonary flavin-containing monooxygenase 2</fullName>
        <shortName>FMO 2</shortName>
    </alternativeName>
</protein>
<proteinExistence type="evidence at protein level"/>
<feature type="initiator methionine" description="Removed" evidence="2">
    <location>
        <position position="1"/>
    </location>
</feature>
<feature type="chain" id="PRO_0000147647" description="Dimethylaniline monooxygenase [N-oxide-forming] 2">
    <location>
        <begin position="2"/>
        <end position="535"/>
    </location>
</feature>
<feature type="transmembrane region" description="Helical" evidence="5">
    <location>
        <begin position="510"/>
        <end position="530"/>
    </location>
</feature>
<feature type="binding site" evidence="4">
    <location>
        <begin position="9"/>
        <end position="13"/>
    </location>
    <ligand>
        <name>FAD</name>
        <dbReference type="ChEBI" id="CHEBI:57692"/>
    </ligand>
</feature>
<feature type="binding site" evidence="4">
    <location>
        <position position="32"/>
    </location>
    <ligand>
        <name>FAD</name>
        <dbReference type="ChEBI" id="CHEBI:57692"/>
    </ligand>
</feature>
<feature type="binding site" evidence="4">
    <location>
        <begin position="40"/>
        <end position="41"/>
    </location>
    <ligand>
        <name>FAD</name>
        <dbReference type="ChEBI" id="CHEBI:57692"/>
    </ligand>
</feature>
<feature type="binding site" evidence="4">
    <location>
        <begin position="60"/>
        <end position="61"/>
    </location>
    <ligand>
        <name>NADP(+)</name>
        <dbReference type="ChEBI" id="CHEBI:58349"/>
    </ligand>
</feature>
<feature type="binding site" evidence="4">
    <location>
        <begin position="61"/>
        <end position="62"/>
    </location>
    <ligand>
        <name>FAD</name>
        <dbReference type="ChEBI" id="CHEBI:57692"/>
    </ligand>
</feature>
<feature type="binding site" evidence="4">
    <location>
        <begin position="195"/>
        <end position="198"/>
    </location>
    <ligand>
        <name>NADP(+)</name>
        <dbReference type="ChEBI" id="CHEBI:58349"/>
    </ligand>
</feature>
<feature type="modified residue" description="N-acetylalanine" evidence="2">
    <location>
        <position position="2"/>
    </location>
</feature>
<feature type="cross-link" description="Glycyl lysine isopeptide (Lys-Gly) (interchain with G-Cter in SUMO)" evidence="3">
    <location>
        <position position="492"/>
    </location>
</feature>
<dbReference type="EC" id="1.14.13.-" evidence="6"/>
<dbReference type="EC" id="1.14.13.8" evidence="6"/>
<dbReference type="EMBL" id="U59453">
    <property type="protein sequence ID" value="AAB02939.1"/>
    <property type="molecule type" value="mRNA"/>
</dbReference>
<dbReference type="RefSeq" id="NP_001036242.1">
    <property type="nucleotide sequence ID" value="NM_001042777.1"/>
</dbReference>
<dbReference type="SMR" id="Q28505"/>
<dbReference type="FunCoup" id="Q28505">
    <property type="interactions" value="109"/>
</dbReference>
<dbReference type="STRING" id="9544.ENSMMUP00000025933"/>
<dbReference type="PaxDb" id="9544-ENSMMUP00000025933"/>
<dbReference type="GeneID" id="703639"/>
<dbReference type="KEGG" id="mcc:703639"/>
<dbReference type="CTD" id="2327"/>
<dbReference type="eggNOG" id="KOG1399">
    <property type="taxonomic scope" value="Eukaryota"/>
</dbReference>
<dbReference type="InParanoid" id="Q28505"/>
<dbReference type="OrthoDB" id="66881at2759"/>
<dbReference type="Proteomes" id="UP000006718">
    <property type="component" value="Unassembled WGS sequence"/>
</dbReference>
<dbReference type="GO" id="GO:0005789">
    <property type="term" value="C:endoplasmic reticulum membrane"/>
    <property type="evidence" value="ECO:0007669"/>
    <property type="project" value="UniProtKB-SubCell"/>
</dbReference>
<dbReference type="GO" id="GO:0016020">
    <property type="term" value="C:membrane"/>
    <property type="evidence" value="ECO:0000250"/>
    <property type="project" value="UniProtKB"/>
</dbReference>
<dbReference type="GO" id="GO:0050660">
    <property type="term" value="F:flavin adenine dinucleotide binding"/>
    <property type="evidence" value="ECO:0007669"/>
    <property type="project" value="InterPro"/>
</dbReference>
<dbReference type="GO" id="GO:0004499">
    <property type="term" value="F:N,N-dimethylaniline monooxygenase activity"/>
    <property type="evidence" value="ECO:0000318"/>
    <property type="project" value="GO_Central"/>
</dbReference>
<dbReference type="GO" id="GO:0050661">
    <property type="term" value="F:NADP binding"/>
    <property type="evidence" value="ECO:0007669"/>
    <property type="project" value="InterPro"/>
</dbReference>
<dbReference type="FunFam" id="3.50.50.60:FF:000042">
    <property type="entry name" value="Dimethylaniline monooxygenase [N-oxide-forming]"/>
    <property type="match status" value="1"/>
</dbReference>
<dbReference type="FunFam" id="3.50.50.60:FF:000073">
    <property type="entry name" value="Dimethylaniline monooxygenase [N-oxide-forming]"/>
    <property type="match status" value="1"/>
</dbReference>
<dbReference type="FunFam" id="3.50.50.60:FF:000409">
    <property type="entry name" value="Dimethylaniline monooxygenase [N-oxide-forming]"/>
    <property type="match status" value="1"/>
</dbReference>
<dbReference type="Gene3D" id="3.50.50.60">
    <property type="entry name" value="FAD/NAD(P)-binding domain"/>
    <property type="match status" value="2"/>
</dbReference>
<dbReference type="InterPro" id="IPR036188">
    <property type="entry name" value="FAD/NAD-bd_sf"/>
</dbReference>
<dbReference type="InterPro" id="IPR000960">
    <property type="entry name" value="Flavin_mOase"/>
</dbReference>
<dbReference type="InterPro" id="IPR020946">
    <property type="entry name" value="Flavin_mOase-like"/>
</dbReference>
<dbReference type="InterPro" id="IPR002254">
    <property type="entry name" value="Flavin_mOase_2"/>
</dbReference>
<dbReference type="InterPro" id="IPR050346">
    <property type="entry name" value="FMO-like"/>
</dbReference>
<dbReference type="PANTHER" id="PTHR23023">
    <property type="entry name" value="DIMETHYLANILINE MONOOXYGENASE"/>
    <property type="match status" value="1"/>
</dbReference>
<dbReference type="Pfam" id="PF00743">
    <property type="entry name" value="FMO-like"/>
    <property type="match status" value="1"/>
</dbReference>
<dbReference type="PIRSF" id="PIRSF000332">
    <property type="entry name" value="FMO"/>
    <property type="match status" value="1"/>
</dbReference>
<dbReference type="PRINTS" id="PR00370">
    <property type="entry name" value="FMOXYGENASE"/>
</dbReference>
<dbReference type="PRINTS" id="PR01122">
    <property type="entry name" value="FMOXYGENASE2"/>
</dbReference>
<dbReference type="SUPFAM" id="SSF51905">
    <property type="entry name" value="FAD/NAD(P)-binding domain"/>
    <property type="match status" value="2"/>
</dbReference>
<evidence type="ECO:0000250" key="1"/>
<evidence type="ECO:0000250" key="2">
    <source>
        <dbReference type="UniProtKB" id="P17635"/>
    </source>
</evidence>
<evidence type="ECO:0000250" key="3">
    <source>
        <dbReference type="UniProtKB" id="Q99518"/>
    </source>
</evidence>
<evidence type="ECO:0000250" key="4">
    <source>
        <dbReference type="UniProtKB" id="Q9HFE4"/>
    </source>
</evidence>
<evidence type="ECO:0000255" key="5"/>
<evidence type="ECO:0000269" key="6">
    <source>
    </source>
</evidence>
<evidence type="ECO:0000305" key="7"/>
<evidence type="ECO:0000305" key="8">
    <source>
    </source>
</evidence>
<keyword id="KW-0007">Acetylation</keyword>
<keyword id="KW-0256">Endoplasmic reticulum</keyword>
<keyword id="KW-0274">FAD</keyword>
<keyword id="KW-0285">Flavoprotein</keyword>
<keyword id="KW-1017">Isopeptide bond</keyword>
<keyword id="KW-0460">Magnesium</keyword>
<keyword id="KW-0472">Membrane</keyword>
<keyword id="KW-0492">Microsome</keyword>
<keyword id="KW-0503">Monooxygenase</keyword>
<keyword id="KW-0521">NADP</keyword>
<keyword id="KW-0560">Oxidoreductase</keyword>
<keyword id="KW-1185">Reference proteome</keyword>
<keyword id="KW-0812">Transmembrane</keyword>
<keyword id="KW-1133">Transmembrane helix</keyword>
<keyword id="KW-0832">Ubl conjugation</keyword>
<gene>
    <name evidence="3" type="primary">FMO2</name>
</gene>
<comment type="function">
    <text evidence="6">Catalyzes the oxidative metabolism of numerous xenobiotics, including mainly therapeutic drugs and insecticides that contain a soft nucleophile, most commonly nitrogen and sulfur and participates to their bioactivation.</text>
</comment>
<comment type="catalytic activity">
    <reaction evidence="6">
        <text>N,N-dimethylaniline + NADPH + O2 + H(+) = N,N-dimethylaniline N-oxide + NADP(+) + H2O</text>
        <dbReference type="Rhea" id="RHEA:24468"/>
        <dbReference type="ChEBI" id="CHEBI:15377"/>
        <dbReference type="ChEBI" id="CHEBI:15378"/>
        <dbReference type="ChEBI" id="CHEBI:15379"/>
        <dbReference type="ChEBI" id="CHEBI:16269"/>
        <dbReference type="ChEBI" id="CHEBI:17735"/>
        <dbReference type="ChEBI" id="CHEBI:57783"/>
        <dbReference type="ChEBI" id="CHEBI:58349"/>
        <dbReference type="EC" id="1.14.13.8"/>
    </reaction>
    <physiologicalReaction direction="left-to-right" evidence="8">
        <dbReference type="Rhea" id="RHEA:24469"/>
    </physiologicalReaction>
</comment>
<comment type="cofactor">
    <cofactor evidence="1">
        <name>FAD</name>
        <dbReference type="ChEBI" id="CHEBI:57692"/>
    </cofactor>
</comment>
<comment type="cofactor">
    <cofactor evidence="1">
        <name>Mg(2+)</name>
        <dbReference type="ChEBI" id="CHEBI:18420"/>
    </cofactor>
</comment>
<comment type="biophysicochemical properties">
    <kinetics>
        <KM evidence="6">670 uM for N,N-dimethylaniline</KM>
        <KM evidence="6">1700 uM for (S)-nicotine</KM>
        <KM evidence="6">760 uM for nitro- 5-thiobenzoate (TNB) (with methimazole-dependent oxidation and western blotting estimation)</KM>
        <KM evidence="6">744 uM for nitro- 5-thiobenzoate (TNB) (with methimazole-dependent oxidation and flavin estimation)</KM>
    </kinetics>
</comment>
<comment type="subcellular location">
    <subcellularLocation>
        <location evidence="2">Microsome membrane</location>
        <topology evidence="2">Single-pass membrane protein</topology>
    </subcellularLocation>
    <subcellularLocation>
        <location evidence="2">Endoplasmic reticulum membrane</location>
        <topology evidence="2">Single-pass membrane protein</topology>
    </subcellularLocation>
</comment>
<comment type="similarity">
    <text evidence="7">Belongs to the FMO family.</text>
</comment>
<organism>
    <name type="scientific">Macaca mulatta</name>
    <name type="common">Rhesus macaque</name>
    <dbReference type="NCBI Taxonomy" id="9544"/>
    <lineage>
        <taxon>Eukaryota</taxon>
        <taxon>Metazoa</taxon>
        <taxon>Chordata</taxon>
        <taxon>Craniata</taxon>
        <taxon>Vertebrata</taxon>
        <taxon>Euteleostomi</taxon>
        <taxon>Mammalia</taxon>
        <taxon>Eutheria</taxon>
        <taxon>Euarchontoglires</taxon>
        <taxon>Primates</taxon>
        <taxon>Haplorrhini</taxon>
        <taxon>Catarrhini</taxon>
        <taxon>Cercopithecidae</taxon>
        <taxon>Cercopithecinae</taxon>
        <taxon>Macaca</taxon>
    </lineage>
</organism>
<reference key="1">
    <citation type="journal article" date="1997" name="Biochim. Biophys. Acta">
        <title>Pulmonary flavin-containing monooxygenase (FMO) in rhesus macaque: expression of FMO2 protein, mRNA and analysis of the cDNA.</title>
        <authorList>
            <person name="Yueh M.-F."/>
            <person name="Krueger S.K."/>
            <person name="Williams D.E."/>
        </authorList>
    </citation>
    <scope>NUCLEOTIDE SEQUENCE [MRNA]</scope>
</reference>
<reference key="2">
    <citation type="journal article" date="2001" name="Drug Metab. Dispos.">
        <title>Characterization of expressed full-length and truncated FMO2 from rhesus monkey.</title>
        <authorList>
            <person name="Krueger S.K."/>
            <person name="Yueh M.F."/>
            <person name="Martin S.R."/>
            <person name="Pereira C.B."/>
            <person name="Williams D.E."/>
        </authorList>
    </citation>
    <scope>FUNCTION</scope>
    <scope>CATALYTIC ACTIVITY</scope>
    <scope>BIOPHYSICOCHEMICAL PROPERTIES</scope>
</reference>